<keyword id="KW-0131">Cell cycle</keyword>
<keyword id="KW-0132">Cell division</keyword>
<keyword id="KW-0175">Coiled coil</keyword>
<keyword id="KW-0963">Cytoplasm</keyword>
<keyword id="KW-0206">Cytoskeleton</keyword>
<keyword id="KW-0333">Golgi apparatus</keyword>
<keyword id="KW-0472">Membrane</keyword>
<keyword id="KW-0493">Microtubule</keyword>
<keyword id="KW-0498">Mitosis</keyword>
<keyword id="KW-0653">Protein transport</keyword>
<keyword id="KW-1185">Reference proteome</keyword>
<keyword id="KW-0813">Transport</keyword>
<feature type="chain" id="PRO_0000458262" description="Golgin subfamily A member 2">
    <location>
        <begin position="1"/>
        <end position="1028"/>
    </location>
</feature>
<feature type="region of interest" description="Disordered" evidence="5">
    <location>
        <begin position="1"/>
        <end position="112"/>
    </location>
</feature>
<feature type="region of interest" description="Disordered" evidence="5">
    <location>
        <begin position="259"/>
        <end position="280"/>
    </location>
</feature>
<feature type="region of interest" description="Disordered" evidence="5">
    <location>
        <begin position="756"/>
        <end position="791"/>
    </location>
</feature>
<feature type="region of interest" description="Disordered" evidence="5">
    <location>
        <begin position="944"/>
        <end position="981"/>
    </location>
</feature>
<feature type="coiled-coil region" evidence="4">
    <location>
        <begin position="162"/>
        <end position="200"/>
    </location>
</feature>
<feature type="coiled-coil region" evidence="4">
    <location>
        <begin position="233"/>
        <end position="388"/>
    </location>
</feature>
<feature type="coiled-coil region" evidence="4">
    <location>
        <begin position="414"/>
        <end position="690"/>
    </location>
</feature>
<feature type="coiled-coil region" evidence="4">
    <location>
        <begin position="738"/>
        <end position="769"/>
    </location>
</feature>
<feature type="coiled-coil region" evidence="4">
    <location>
        <begin position="799"/>
        <end position="840"/>
    </location>
</feature>
<feature type="compositionally biased region" description="Basic and acidic residues" evidence="5">
    <location>
        <begin position="40"/>
        <end position="60"/>
    </location>
</feature>
<feature type="compositionally biased region" description="Polar residues" evidence="5">
    <location>
        <begin position="74"/>
        <end position="87"/>
    </location>
</feature>
<feature type="compositionally biased region" description="Polar residues" evidence="5">
    <location>
        <begin position="945"/>
        <end position="964"/>
    </location>
</feature>
<protein>
    <recommendedName>
        <fullName evidence="8">Golgin subfamily A member 2</fullName>
    </recommendedName>
    <alternativeName>
        <fullName evidence="9">Golgin A2</fullName>
    </alternativeName>
    <alternativeName>
        <fullName evidence="7">cis-Golgi matrix protein GM130</fullName>
    </alternativeName>
</protein>
<comment type="function">
    <text evidence="1 2 3">Peripheral membrane component of the cis-Golgi stack that acts as a membrane skeleton that maintains the structure of the Golgi apparatus, and as a vesicle thether that facilitates vesicle fusion to the Golgi membrane (By similarity). Required for normal protein transport from the endoplasmic reticulum to the Golgi apparatus and the cell membrane (By similarity). Plays a central role in mitotic Golgi disassembly (By similarity). Also plays a key role in spindle pole assembly and centrosome organization. It probably promotes mitotic spindle pole assembly by activating assembly factors to nucleate microtubules around the Golgi and capture them to couple mitotic membranes to the spindle (By similarity). Also required for the Golgi ribbon formation and glycosylation of membrane and secretory proteins (By similarity).</text>
</comment>
<comment type="subcellular location">
    <subcellularLocation>
        <location evidence="1">Golgi apparatus</location>
        <location evidence="1">cis-Golgi network membrane</location>
        <topology evidence="1">Peripheral membrane protein</topology>
        <orientation evidence="1">Cytoplasmic side</orientation>
    </subcellularLocation>
    <subcellularLocation>
        <location evidence="1">Endoplasmic reticulum-Golgi intermediate compartment membrane</location>
        <topology evidence="1">Peripheral membrane protein</topology>
        <orientation evidence="1">Cytoplasmic side</orientation>
    </subcellularLocation>
    <subcellularLocation>
        <location evidence="1">Cytoplasm</location>
        <location evidence="1">Cytoskeleton</location>
        <location evidence="1">Spindle pole</location>
    </subcellularLocation>
    <text evidence="1 2">Associates with the mitotic spindle during mitosis.</text>
</comment>
<comment type="disruption phenotype">
    <text evidence="6">Morpholino knocked-down fishes have smaller brain and significantly diminished motility compared to controls, in association with disorganized muscle fibers. Morphants die between 3-4 days post-fertilization (dpf). Other organs such as eyes and heart are not affected by golga2 knockdown.</text>
</comment>
<comment type="similarity">
    <text evidence="8">Belongs to the GOLGA2 family.</text>
</comment>
<organism>
    <name type="scientific">Danio rerio</name>
    <name type="common">Zebrafish</name>
    <name type="synonym">Brachydanio rerio</name>
    <dbReference type="NCBI Taxonomy" id="7955"/>
    <lineage>
        <taxon>Eukaryota</taxon>
        <taxon>Metazoa</taxon>
        <taxon>Chordata</taxon>
        <taxon>Craniata</taxon>
        <taxon>Vertebrata</taxon>
        <taxon>Euteleostomi</taxon>
        <taxon>Actinopterygii</taxon>
        <taxon>Neopterygii</taxon>
        <taxon>Teleostei</taxon>
        <taxon>Ostariophysi</taxon>
        <taxon>Cypriniformes</taxon>
        <taxon>Danionidae</taxon>
        <taxon>Danioninae</taxon>
        <taxon>Danio</taxon>
    </lineage>
</organism>
<dbReference type="EMBL" id="AB245440">
    <property type="protein sequence ID" value="BAF43730.1"/>
    <property type="molecule type" value="mRNA"/>
</dbReference>
<dbReference type="EMBL" id="CU138550">
    <property type="status" value="NOT_ANNOTATED_CDS"/>
    <property type="molecule type" value="Genomic_DNA"/>
</dbReference>
<dbReference type="EMBL" id="CU914160">
    <property type="status" value="NOT_ANNOTATED_CDS"/>
    <property type="molecule type" value="Genomic_DNA"/>
</dbReference>
<dbReference type="RefSeq" id="NP_001120806.1">
    <property type="nucleotide sequence ID" value="NM_001127334.1"/>
</dbReference>
<dbReference type="SMR" id="A1IH00"/>
<dbReference type="STRING" id="7955.ENSDARP00000086520"/>
<dbReference type="PaxDb" id="7955-ENSDARP00000111877"/>
<dbReference type="PeptideAtlas" id="A1IH00"/>
<dbReference type="Ensembl" id="ENSDART00000092087">
    <property type="protein sequence ID" value="ENSDARP00000086520"/>
    <property type="gene ID" value="ENSDARG00000063197"/>
</dbReference>
<dbReference type="GeneID" id="565431"/>
<dbReference type="KEGG" id="dre:565431"/>
<dbReference type="AGR" id="ZFIN:ZDB-GENE-081030-1"/>
<dbReference type="CTD" id="2801"/>
<dbReference type="ZFIN" id="ZDB-GENE-081030-1">
    <property type="gene designation" value="golga2"/>
</dbReference>
<dbReference type="HOGENOM" id="CLU_012403_0_0_1"/>
<dbReference type="InParanoid" id="A1IH00"/>
<dbReference type="OMA" id="IQVIIAE"/>
<dbReference type="OrthoDB" id="5978643at2759"/>
<dbReference type="TreeFam" id="TF316990"/>
<dbReference type="PRO" id="PR:A1IH00"/>
<dbReference type="Proteomes" id="UP000000437">
    <property type="component" value="Chromosome 5"/>
</dbReference>
<dbReference type="Bgee" id="ENSDARG00000063197">
    <property type="expression patterns" value="Expressed in early embryo and 20 other cell types or tissues"/>
</dbReference>
<dbReference type="ExpressionAtlas" id="A1IH00">
    <property type="expression patterns" value="baseline"/>
</dbReference>
<dbReference type="GO" id="GO:0005801">
    <property type="term" value="C:cis-Golgi network"/>
    <property type="evidence" value="ECO:0000318"/>
    <property type="project" value="GO_Central"/>
</dbReference>
<dbReference type="GO" id="GO:0033116">
    <property type="term" value="C:endoplasmic reticulum-Golgi intermediate compartment membrane"/>
    <property type="evidence" value="ECO:0007669"/>
    <property type="project" value="UniProtKB-SubCell"/>
</dbReference>
<dbReference type="GO" id="GO:0000137">
    <property type="term" value="C:Golgi cis cisterna"/>
    <property type="evidence" value="ECO:0000318"/>
    <property type="project" value="GO_Central"/>
</dbReference>
<dbReference type="GO" id="GO:0032580">
    <property type="term" value="C:Golgi cisterna membrane"/>
    <property type="evidence" value="ECO:0000318"/>
    <property type="project" value="GO_Central"/>
</dbReference>
<dbReference type="GO" id="GO:0005874">
    <property type="term" value="C:microtubule"/>
    <property type="evidence" value="ECO:0007669"/>
    <property type="project" value="UniProtKB-KW"/>
</dbReference>
<dbReference type="GO" id="GO:0000922">
    <property type="term" value="C:spindle pole"/>
    <property type="evidence" value="ECO:0007669"/>
    <property type="project" value="UniProtKB-SubCell"/>
</dbReference>
<dbReference type="GO" id="GO:0007420">
    <property type="term" value="P:brain development"/>
    <property type="evidence" value="ECO:0000315"/>
    <property type="project" value="ZFIN"/>
</dbReference>
<dbReference type="GO" id="GO:0051301">
    <property type="term" value="P:cell division"/>
    <property type="evidence" value="ECO:0007669"/>
    <property type="project" value="UniProtKB-KW"/>
</dbReference>
<dbReference type="GO" id="GO:0007030">
    <property type="term" value="P:Golgi organization"/>
    <property type="evidence" value="ECO:0000318"/>
    <property type="project" value="GO_Central"/>
</dbReference>
<dbReference type="GO" id="GO:0015031">
    <property type="term" value="P:protein transport"/>
    <property type="evidence" value="ECO:0007669"/>
    <property type="project" value="UniProtKB-KW"/>
</dbReference>
<dbReference type="GO" id="GO:0007519">
    <property type="term" value="P:skeletal muscle tissue development"/>
    <property type="evidence" value="ECO:0000315"/>
    <property type="project" value="ZFIN"/>
</dbReference>
<dbReference type="GO" id="GO:0001966">
    <property type="term" value="P:thigmotaxis"/>
    <property type="evidence" value="ECO:0000315"/>
    <property type="project" value="ZFIN"/>
</dbReference>
<dbReference type="InterPro" id="IPR043937">
    <property type="entry name" value="GM130_C"/>
</dbReference>
<dbReference type="InterPro" id="IPR043976">
    <property type="entry name" value="GOLGA_cons_dom"/>
</dbReference>
<dbReference type="InterPro" id="IPR024858">
    <property type="entry name" value="Golgin_A"/>
</dbReference>
<dbReference type="PANTHER" id="PTHR10881:SF46">
    <property type="entry name" value="GOLGIN SUBFAMILY A MEMBER 2"/>
    <property type="match status" value="1"/>
</dbReference>
<dbReference type="PANTHER" id="PTHR10881">
    <property type="entry name" value="GOLGIN SUBFAMILY A MEMBER-RELATED"/>
    <property type="match status" value="1"/>
</dbReference>
<dbReference type="Pfam" id="PF19046">
    <property type="entry name" value="GM130_C"/>
    <property type="match status" value="1"/>
</dbReference>
<dbReference type="Pfam" id="PF15070">
    <property type="entry name" value="GOLGA2L5"/>
    <property type="match status" value="1"/>
</dbReference>
<accession>A1IH00</accession>
<accession>A0A8M1NGZ4</accession>
<reference key="1">
    <citation type="submission" date="2005-12" db="EMBL/GenBank/DDBJ databases">
        <title>GM130 orthologue, Danio Rerio.</title>
        <authorList>
            <person name="Ota K."/>
            <person name="Nakamura N."/>
        </authorList>
    </citation>
    <scope>NUCLEOTIDE SEQUENCE [MRNA]</scope>
    <source>
        <strain>Tuebingen</strain>
    </source>
</reference>
<reference key="2">
    <citation type="journal article" date="2013" name="Nature">
        <title>The zebrafish reference genome sequence and its relationship to the human genome.</title>
        <authorList>
            <person name="Howe K."/>
            <person name="Clark M.D."/>
            <person name="Torroja C.F."/>
            <person name="Torrance J."/>
            <person name="Berthelot C."/>
            <person name="Muffato M."/>
            <person name="Collins J.E."/>
            <person name="Humphray S."/>
            <person name="McLaren K."/>
            <person name="Matthews L."/>
            <person name="McLaren S."/>
            <person name="Sealy I."/>
            <person name="Caccamo M."/>
            <person name="Churcher C."/>
            <person name="Scott C."/>
            <person name="Barrett J.C."/>
            <person name="Koch R."/>
            <person name="Rauch G.J."/>
            <person name="White S."/>
            <person name="Chow W."/>
            <person name="Kilian B."/>
            <person name="Quintais L.T."/>
            <person name="Guerra-Assuncao J.A."/>
            <person name="Zhou Y."/>
            <person name="Gu Y."/>
            <person name="Yen J."/>
            <person name="Vogel J.H."/>
            <person name="Eyre T."/>
            <person name="Redmond S."/>
            <person name="Banerjee R."/>
            <person name="Chi J."/>
            <person name="Fu B."/>
            <person name="Langley E."/>
            <person name="Maguire S.F."/>
            <person name="Laird G.K."/>
            <person name="Lloyd D."/>
            <person name="Kenyon E."/>
            <person name="Donaldson S."/>
            <person name="Sehra H."/>
            <person name="Almeida-King J."/>
            <person name="Loveland J."/>
            <person name="Trevanion S."/>
            <person name="Jones M."/>
            <person name="Quail M."/>
            <person name="Willey D."/>
            <person name="Hunt A."/>
            <person name="Burton J."/>
            <person name="Sims S."/>
            <person name="McLay K."/>
            <person name="Plumb B."/>
            <person name="Davis J."/>
            <person name="Clee C."/>
            <person name="Oliver K."/>
            <person name="Clark R."/>
            <person name="Riddle C."/>
            <person name="Elliot D."/>
            <person name="Threadgold G."/>
            <person name="Harden G."/>
            <person name="Ware D."/>
            <person name="Begum S."/>
            <person name="Mortimore B."/>
            <person name="Kerry G."/>
            <person name="Heath P."/>
            <person name="Phillimore B."/>
            <person name="Tracey A."/>
            <person name="Corby N."/>
            <person name="Dunn M."/>
            <person name="Johnson C."/>
            <person name="Wood J."/>
            <person name="Clark S."/>
            <person name="Pelan S."/>
            <person name="Griffiths G."/>
            <person name="Smith M."/>
            <person name="Glithero R."/>
            <person name="Howden P."/>
            <person name="Barker N."/>
            <person name="Lloyd C."/>
            <person name="Stevens C."/>
            <person name="Harley J."/>
            <person name="Holt K."/>
            <person name="Panagiotidis G."/>
            <person name="Lovell J."/>
            <person name="Beasley H."/>
            <person name="Henderson C."/>
            <person name="Gordon D."/>
            <person name="Auger K."/>
            <person name="Wright D."/>
            <person name="Collins J."/>
            <person name="Raisen C."/>
            <person name="Dyer L."/>
            <person name="Leung K."/>
            <person name="Robertson L."/>
            <person name="Ambridge K."/>
            <person name="Leongamornlert D."/>
            <person name="McGuire S."/>
            <person name="Gilderthorp R."/>
            <person name="Griffiths C."/>
            <person name="Manthravadi D."/>
            <person name="Nichol S."/>
            <person name="Barker G."/>
            <person name="Whitehead S."/>
            <person name="Kay M."/>
            <person name="Brown J."/>
            <person name="Murnane C."/>
            <person name="Gray E."/>
            <person name="Humphries M."/>
            <person name="Sycamore N."/>
            <person name="Barker D."/>
            <person name="Saunders D."/>
            <person name="Wallis J."/>
            <person name="Babbage A."/>
            <person name="Hammond S."/>
            <person name="Mashreghi-Mohammadi M."/>
            <person name="Barr L."/>
            <person name="Martin S."/>
            <person name="Wray P."/>
            <person name="Ellington A."/>
            <person name="Matthews N."/>
            <person name="Ellwood M."/>
            <person name="Woodmansey R."/>
            <person name="Clark G."/>
            <person name="Cooper J."/>
            <person name="Tromans A."/>
            <person name="Grafham D."/>
            <person name="Skuce C."/>
            <person name="Pandian R."/>
            <person name="Andrews R."/>
            <person name="Harrison E."/>
            <person name="Kimberley A."/>
            <person name="Garnett J."/>
            <person name="Fosker N."/>
            <person name="Hall R."/>
            <person name="Garner P."/>
            <person name="Kelly D."/>
            <person name="Bird C."/>
            <person name="Palmer S."/>
            <person name="Gehring I."/>
            <person name="Berger A."/>
            <person name="Dooley C.M."/>
            <person name="Ersan-Urun Z."/>
            <person name="Eser C."/>
            <person name="Geiger H."/>
            <person name="Geisler M."/>
            <person name="Karotki L."/>
            <person name="Kirn A."/>
            <person name="Konantz J."/>
            <person name="Konantz M."/>
            <person name="Oberlander M."/>
            <person name="Rudolph-Geiger S."/>
            <person name="Teucke M."/>
            <person name="Lanz C."/>
            <person name="Raddatz G."/>
            <person name="Osoegawa K."/>
            <person name="Zhu B."/>
            <person name="Rapp A."/>
            <person name="Widaa S."/>
            <person name="Langford C."/>
            <person name="Yang F."/>
            <person name="Schuster S.C."/>
            <person name="Carter N.P."/>
            <person name="Harrow J."/>
            <person name="Ning Z."/>
            <person name="Herrero J."/>
            <person name="Searle S.M."/>
            <person name="Enright A."/>
            <person name="Geisler R."/>
            <person name="Plasterk R.H."/>
            <person name="Lee C."/>
            <person name="Westerfield M."/>
            <person name="de Jong P.J."/>
            <person name="Zon L.I."/>
            <person name="Postlethwait J.H."/>
            <person name="Nusslein-Volhard C."/>
            <person name="Hubbard T.J."/>
            <person name="Roest Crollius H."/>
            <person name="Rogers J."/>
            <person name="Stemple D.L."/>
        </authorList>
    </citation>
    <scope>NUCLEOTIDE SEQUENCE [LARGE SCALE GENOMIC DNA]</scope>
    <source>
        <strain>Tuebingen</strain>
    </source>
</reference>
<reference key="3">
    <citation type="journal article" date="2016" name="Hum. Genet.">
        <title>GOLGA2, encoding a master regulator of golgi apparatus, is mutated in a patient with a neuromuscular disorder.</title>
        <authorList>
            <person name="Shamseldin H.E."/>
            <person name="Bennett A.H."/>
            <person name="Alfadhel M."/>
            <person name="Gupta V."/>
            <person name="Alkuraya F.S."/>
        </authorList>
    </citation>
    <scope>DISRUPTION PHENOTYPE</scope>
</reference>
<proteinExistence type="evidence at transcript level"/>
<evidence type="ECO:0000250" key="1">
    <source>
        <dbReference type="UniProtKB" id="Q08379"/>
    </source>
</evidence>
<evidence type="ECO:0000250" key="2">
    <source>
        <dbReference type="UniProtKB" id="Q62839"/>
    </source>
</evidence>
<evidence type="ECO:0000250" key="3">
    <source>
        <dbReference type="UniProtKB" id="Q921M4"/>
    </source>
</evidence>
<evidence type="ECO:0000255" key="4"/>
<evidence type="ECO:0000256" key="5">
    <source>
        <dbReference type="SAM" id="MobiDB-lite"/>
    </source>
</evidence>
<evidence type="ECO:0000269" key="6">
    <source>
    </source>
</evidence>
<evidence type="ECO:0000303" key="7">
    <source ref="1"/>
</evidence>
<evidence type="ECO:0000305" key="8"/>
<evidence type="ECO:0000312" key="9">
    <source>
        <dbReference type="ZFIN" id="ZDB-GENE-081030-1"/>
    </source>
</evidence>
<gene>
    <name evidence="9" type="primary">golga2</name>
    <name evidence="7" type="synonym">drgm130</name>
</gene>
<sequence>MADQNRQIKLAAAKKKLKEFQQKTIPSTGSAGPKKKRKVKGDQTDAPADRRSPENERVDVSQELEEAGAEHVSNPASAINTDNSAPQNYPADANGDEHPLENNRPLSSTESLRQLSQQLNGLLSESSTHINGDSDPPAVNEKELETRNQELSAALDSSALTNTQLTSKLETLTKQSQELSDQLQKERKEFEQKFTKEQGAMREQLQVHIQTIGILVSEKSELQTALSYTQQAARQKAAEAEDLSSRLQASKQRVSELERTLSSVSTQQKQHERHNKELEKERDSLRLEIIRFNNVSEESRQQSSELSEQLKLRVNENSALKLELEDLRKRLEMADVMLQQFSSQSGPPSEHQQLQLLLEEKHQLENHATQLMESVAQLQAERDQYAVQMQEDGRVWKDKTEQLLSQVRLMSEERDSTAAQILELQERIMELENTAAVMSTEQEPQASSQLSGPSETELALQETLRSLQEERDALSLQFQAQVRDNEQLSRLVQEQEVKLQELERQAERASEDAQDRLRILEDVQSDKATISRALTQNRELKDQLAELQNGFVKLTNENMELTSALQSEQHVKKEIARKMGQLQEDLHNAKEQLLESSSELTSVQEQRDQYLAHLQQYSAGYQQLLAEREHLQKQFLQQTQLMDRLQHDEVQGKVQLEQSHMQLQEVQEKLSRLVRDNEELKTEVQELLNGSIMNTSHRDEGDGLESQTLPESFQKSQIAIPEDFESREEMKEFIHSVLSRVEAERDEMSRRLEEERRIHQDTRQQLTALSHDHHHHHHHEPHSTCAETDGSEGVPVEVHEALRVAMEKLQERFTKLMQEKADLKERLEELEHRCIQLSGETDTIGEYIALYQNQRAIMKQKHVEKEQYINMLAKDKEEMKTKLAELQDLVMRLVGERNEWYSRYMSAVGNRDLLNSNAEQIHPAERRMEISGVDAPAVLDMSTAMDVSSSPQSSTAEIQSQSSERPAADPISSPSLRPQEDGTARQIMQLLQEIQNPQSRPAPFLGENPCIPFFYRPDEHDEVKILVV</sequence>
<name>GOGA2_DANRE</name>